<reference key="1">
    <citation type="journal article" date="2006" name="Proc. Natl. Acad. Sci. U.S.A.">
        <title>Comparative genomics of the lactic acid bacteria.</title>
        <authorList>
            <person name="Makarova K.S."/>
            <person name="Slesarev A."/>
            <person name="Wolf Y.I."/>
            <person name="Sorokin A."/>
            <person name="Mirkin B."/>
            <person name="Koonin E.V."/>
            <person name="Pavlov A."/>
            <person name="Pavlova N."/>
            <person name="Karamychev V."/>
            <person name="Polouchine N."/>
            <person name="Shakhova V."/>
            <person name="Grigoriev I."/>
            <person name="Lou Y."/>
            <person name="Rohksar D."/>
            <person name="Lucas S."/>
            <person name="Huang K."/>
            <person name="Goodstein D.M."/>
            <person name="Hawkins T."/>
            <person name="Plengvidhya V."/>
            <person name="Welker D."/>
            <person name="Hughes J."/>
            <person name="Goh Y."/>
            <person name="Benson A."/>
            <person name="Baldwin K."/>
            <person name="Lee J.-H."/>
            <person name="Diaz-Muniz I."/>
            <person name="Dosti B."/>
            <person name="Smeianov V."/>
            <person name="Wechter W."/>
            <person name="Barabote R."/>
            <person name="Lorca G."/>
            <person name="Altermann E."/>
            <person name="Barrangou R."/>
            <person name="Ganesan B."/>
            <person name="Xie Y."/>
            <person name="Rawsthorne H."/>
            <person name="Tamir D."/>
            <person name="Parker C."/>
            <person name="Breidt F."/>
            <person name="Broadbent J.R."/>
            <person name="Hutkins R."/>
            <person name="O'Sullivan D."/>
            <person name="Steele J."/>
            <person name="Unlu G."/>
            <person name="Saier M.H. Jr."/>
            <person name="Klaenhammer T."/>
            <person name="Richardson P."/>
            <person name="Kozyavkin S."/>
            <person name="Weimer B.C."/>
            <person name="Mills D.A."/>
        </authorList>
    </citation>
    <scope>NUCLEOTIDE SEQUENCE [LARGE SCALE GENOMIC DNA]</scope>
    <source>
        <strain>ATCC 25745 / CCUG 21536 / LMG 10740 / 183-1w</strain>
    </source>
</reference>
<feature type="chain" id="PRO_1000047454" description="Glycine--tRNA ligase alpha subunit">
    <location>
        <begin position="1"/>
        <end position="299"/>
    </location>
</feature>
<dbReference type="EC" id="6.1.1.14" evidence="1"/>
<dbReference type="EMBL" id="CP000422">
    <property type="protein sequence ID" value="ABJ68157.1"/>
    <property type="molecule type" value="Genomic_DNA"/>
</dbReference>
<dbReference type="RefSeq" id="WP_011673492.1">
    <property type="nucleotide sequence ID" value="NC_008525.1"/>
</dbReference>
<dbReference type="SMR" id="Q03F65"/>
<dbReference type="STRING" id="278197.PEPE_1102"/>
<dbReference type="GeneID" id="33062725"/>
<dbReference type="KEGG" id="ppe:PEPE_1102"/>
<dbReference type="eggNOG" id="COG0752">
    <property type="taxonomic scope" value="Bacteria"/>
</dbReference>
<dbReference type="HOGENOM" id="CLU_057066_1_0_9"/>
<dbReference type="OrthoDB" id="9802183at2"/>
<dbReference type="Proteomes" id="UP000000773">
    <property type="component" value="Chromosome"/>
</dbReference>
<dbReference type="GO" id="GO:0005829">
    <property type="term" value="C:cytosol"/>
    <property type="evidence" value="ECO:0007669"/>
    <property type="project" value="TreeGrafter"/>
</dbReference>
<dbReference type="GO" id="GO:0005524">
    <property type="term" value="F:ATP binding"/>
    <property type="evidence" value="ECO:0007669"/>
    <property type="project" value="UniProtKB-UniRule"/>
</dbReference>
<dbReference type="GO" id="GO:0140096">
    <property type="term" value="F:catalytic activity, acting on a protein"/>
    <property type="evidence" value="ECO:0007669"/>
    <property type="project" value="UniProtKB-ARBA"/>
</dbReference>
<dbReference type="GO" id="GO:0004820">
    <property type="term" value="F:glycine-tRNA ligase activity"/>
    <property type="evidence" value="ECO:0007669"/>
    <property type="project" value="UniProtKB-UniRule"/>
</dbReference>
<dbReference type="GO" id="GO:0016740">
    <property type="term" value="F:transferase activity"/>
    <property type="evidence" value="ECO:0007669"/>
    <property type="project" value="UniProtKB-ARBA"/>
</dbReference>
<dbReference type="GO" id="GO:0006426">
    <property type="term" value="P:glycyl-tRNA aminoacylation"/>
    <property type="evidence" value="ECO:0007669"/>
    <property type="project" value="UniProtKB-UniRule"/>
</dbReference>
<dbReference type="CDD" id="cd00733">
    <property type="entry name" value="GlyRS_alpha_core"/>
    <property type="match status" value="1"/>
</dbReference>
<dbReference type="FunFam" id="3.30.930.10:FF:000006">
    <property type="entry name" value="Glycine--tRNA ligase alpha subunit"/>
    <property type="match status" value="1"/>
</dbReference>
<dbReference type="Gene3D" id="3.30.930.10">
    <property type="entry name" value="Bira Bifunctional Protein, Domain 2"/>
    <property type="match status" value="1"/>
</dbReference>
<dbReference type="Gene3D" id="1.20.58.180">
    <property type="entry name" value="Class II aaRS and biotin synthetases, domain 2"/>
    <property type="match status" value="1"/>
</dbReference>
<dbReference type="HAMAP" id="MF_00254">
    <property type="entry name" value="Gly_tRNA_synth_alpha"/>
    <property type="match status" value="1"/>
</dbReference>
<dbReference type="InterPro" id="IPR045864">
    <property type="entry name" value="aa-tRNA-synth_II/BPL/LPL"/>
</dbReference>
<dbReference type="InterPro" id="IPR006194">
    <property type="entry name" value="Gly-tRNA-synth_heterodimer"/>
</dbReference>
<dbReference type="InterPro" id="IPR002310">
    <property type="entry name" value="Gly-tRNA_ligase_asu"/>
</dbReference>
<dbReference type="NCBIfam" id="TIGR00388">
    <property type="entry name" value="glyQ"/>
    <property type="match status" value="1"/>
</dbReference>
<dbReference type="NCBIfam" id="NF006827">
    <property type="entry name" value="PRK09348.1"/>
    <property type="match status" value="1"/>
</dbReference>
<dbReference type="PANTHER" id="PTHR30075:SF2">
    <property type="entry name" value="GLYCINE--TRNA LIGASE, CHLOROPLASTIC_MITOCHONDRIAL 2"/>
    <property type="match status" value="1"/>
</dbReference>
<dbReference type="PANTHER" id="PTHR30075">
    <property type="entry name" value="GLYCYL-TRNA SYNTHETASE"/>
    <property type="match status" value="1"/>
</dbReference>
<dbReference type="Pfam" id="PF02091">
    <property type="entry name" value="tRNA-synt_2e"/>
    <property type="match status" value="1"/>
</dbReference>
<dbReference type="PRINTS" id="PR01044">
    <property type="entry name" value="TRNASYNTHGA"/>
</dbReference>
<dbReference type="SUPFAM" id="SSF55681">
    <property type="entry name" value="Class II aaRS and biotin synthetases"/>
    <property type="match status" value="1"/>
</dbReference>
<dbReference type="PROSITE" id="PS50861">
    <property type="entry name" value="AA_TRNA_LIGASE_II_GLYAB"/>
    <property type="match status" value="1"/>
</dbReference>
<proteinExistence type="inferred from homology"/>
<protein>
    <recommendedName>
        <fullName evidence="1">Glycine--tRNA ligase alpha subunit</fullName>
        <ecNumber evidence="1">6.1.1.14</ecNumber>
    </recommendedName>
    <alternativeName>
        <fullName evidence="1">Glycyl-tRNA synthetase alpha subunit</fullName>
        <shortName evidence="1">GlyRS</shortName>
    </alternativeName>
</protein>
<comment type="catalytic activity">
    <reaction evidence="1">
        <text>tRNA(Gly) + glycine + ATP = glycyl-tRNA(Gly) + AMP + diphosphate</text>
        <dbReference type="Rhea" id="RHEA:16013"/>
        <dbReference type="Rhea" id="RHEA-COMP:9664"/>
        <dbReference type="Rhea" id="RHEA-COMP:9683"/>
        <dbReference type="ChEBI" id="CHEBI:30616"/>
        <dbReference type="ChEBI" id="CHEBI:33019"/>
        <dbReference type="ChEBI" id="CHEBI:57305"/>
        <dbReference type="ChEBI" id="CHEBI:78442"/>
        <dbReference type="ChEBI" id="CHEBI:78522"/>
        <dbReference type="ChEBI" id="CHEBI:456215"/>
        <dbReference type="EC" id="6.1.1.14"/>
    </reaction>
</comment>
<comment type="subunit">
    <text evidence="1">Tetramer of two alpha and two beta subunits.</text>
</comment>
<comment type="subcellular location">
    <subcellularLocation>
        <location evidence="1">Cytoplasm</location>
    </subcellularLocation>
</comment>
<comment type="similarity">
    <text evidence="1">Belongs to the class-II aminoacyl-tRNA synthetase family.</text>
</comment>
<evidence type="ECO:0000255" key="1">
    <source>
        <dbReference type="HAMAP-Rule" id="MF_00254"/>
    </source>
</evidence>
<gene>
    <name evidence="1" type="primary">glyQ</name>
    <name type="ordered locus">PEPE_1102</name>
</gene>
<sequence length="299" mass="34357">MNKKLSVQEIILTLQKYWAEQGCMLMEAYDTEKGAGTMSPYTFLRAIGPEPWNAAYVEPSRRPADGRYGENPNRLYQHHQFQVVMKPSPENIQELYLGSLKALGIDPLEHDIRFVEDNWENPSMGCAGVGWEVWLDGMEVTQFTYFQQVGGLEVNPVTSEVTYGLERLSSYIQDVESVFDLEWGNGVSYGDIFREPEFEHSKYSFEESNQAMLEKMFNDFEAEANRLIEEGLVHPAYDYILKCSHTFNLLDARGTVSVTERAGFLSRIRNMARKVARAFVEEREKLGFPLLKNNEEEAK</sequence>
<organism>
    <name type="scientific">Pediococcus pentosaceus (strain ATCC 25745 / CCUG 21536 / LMG 10740 / 183-1w)</name>
    <dbReference type="NCBI Taxonomy" id="278197"/>
    <lineage>
        <taxon>Bacteria</taxon>
        <taxon>Bacillati</taxon>
        <taxon>Bacillota</taxon>
        <taxon>Bacilli</taxon>
        <taxon>Lactobacillales</taxon>
        <taxon>Lactobacillaceae</taxon>
        <taxon>Pediococcus</taxon>
    </lineage>
</organism>
<keyword id="KW-0030">Aminoacyl-tRNA synthetase</keyword>
<keyword id="KW-0067">ATP-binding</keyword>
<keyword id="KW-0963">Cytoplasm</keyword>
<keyword id="KW-0436">Ligase</keyword>
<keyword id="KW-0547">Nucleotide-binding</keyword>
<keyword id="KW-0648">Protein biosynthesis</keyword>
<name>SYGA_PEDPA</name>
<accession>Q03F65</accession>